<keyword id="KW-0963">Cytoplasm</keyword>
<keyword id="KW-0378">Hydrolase</keyword>
<keyword id="KW-0479">Metal-binding</keyword>
<keyword id="KW-0547">Nucleotide-binding</keyword>
<keyword id="KW-1185">Reference proteome</keyword>
<reference key="1">
    <citation type="journal article" date="2008" name="J. Bacteriol.">
        <title>The genome of Heliobacterium modesticaldum, a phototrophic representative of the Firmicutes containing the simplest photosynthetic apparatus.</title>
        <authorList>
            <person name="Sattley W.M."/>
            <person name="Madigan M.T."/>
            <person name="Swingley W.D."/>
            <person name="Cheung P.C."/>
            <person name="Clocksin K.M."/>
            <person name="Conrad A.L."/>
            <person name="Dejesa L.C."/>
            <person name="Honchak B.M."/>
            <person name="Jung D.O."/>
            <person name="Karbach L.E."/>
            <person name="Kurdoglu A."/>
            <person name="Lahiri S."/>
            <person name="Mastrian S.D."/>
            <person name="Page L.E."/>
            <person name="Taylor H.L."/>
            <person name="Wang Z.T."/>
            <person name="Raymond J."/>
            <person name="Chen M."/>
            <person name="Blankenship R.E."/>
            <person name="Touchman J.W."/>
        </authorList>
    </citation>
    <scope>NUCLEOTIDE SEQUENCE [LARGE SCALE GENOMIC DNA]</scope>
    <source>
        <strain>ATCC 51547 / Ice1</strain>
    </source>
</reference>
<sequence>MRILLTNDDGIHAPGIHALWRIFDDWADIFVVAPDTERSATGHGITVHQPLRVEKLSFANPHCHGWAVNGTPADCVKLAMEELLAEPPHIVISGINRGPNLGTDVLYSGTVSAAMEGVIYGVPSIAVSVTGWHTADYTVAAETTRLLCEKLVARGLTPDTFLNVNVPDLPRERIAGIQVTKLGSRRYQNIFDKRTDPRGRTYYWMAGEVHDVDAGEGTDISAVNAGAISVTPIHFDLTNYSLIQEVSDWLGGGSSPFADRNKKDDVETKRKA</sequence>
<accession>B0TAY4</accession>
<gene>
    <name evidence="1" type="primary">surE</name>
    <name type="ordered locus">Helmi_24700</name>
    <name type="ORF">HM1_2558</name>
</gene>
<name>SURE_HELMI</name>
<feature type="chain" id="PRO_1000092007" description="5'-nucleotidase SurE">
    <location>
        <begin position="1"/>
        <end position="272"/>
    </location>
</feature>
<feature type="binding site" evidence="1">
    <location>
        <position position="8"/>
    </location>
    <ligand>
        <name>a divalent metal cation</name>
        <dbReference type="ChEBI" id="CHEBI:60240"/>
    </ligand>
</feature>
<feature type="binding site" evidence="1">
    <location>
        <position position="9"/>
    </location>
    <ligand>
        <name>a divalent metal cation</name>
        <dbReference type="ChEBI" id="CHEBI:60240"/>
    </ligand>
</feature>
<feature type="binding site" evidence="1">
    <location>
        <position position="39"/>
    </location>
    <ligand>
        <name>a divalent metal cation</name>
        <dbReference type="ChEBI" id="CHEBI:60240"/>
    </ligand>
</feature>
<feature type="binding site" evidence="1">
    <location>
        <position position="96"/>
    </location>
    <ligand>
        <name>a divalent metal cation</name>
        <dbReference type="ChEBI" id="CHEBI:60240"/>
    </ligand>
</feature>
<proteinExistence type="inferred from homology"/>
<comment type="function">
    <text evidence="1">Nucleotidase that shows phosphatase activity on nucleoside 5'-monophosphates.</text>
</comment>
<comment type="catalytic activity">
    <reaction evidence="1">
        <text>a ribonucleoside 5'-phosphate + H2O = a ribonucleoside + phosphate</text>
        <dbReference type="Rhea" id="RHEA:12484"/>
        <dbReference type="ChEBI" id="CHEBI:15377"/>
        <dbReference type="ChEBI" id="CHEBI:18254"/>
        <dbReference type="ChEBI" id="CHEBI:43474"/>
        <dbReference type="ChEBI" id="CHEBI:58043"/>
        <dbReference type="EC" id="3.1.3.5"/>
    </reaction>
</comment>
<comment type="cofactor">
    <cofactor evidence="1">
        <name>a divalent metal cation</name>
        <dbReference type="ChEBI" id="CHEBI:60240"/>
    </cofactor>
    <text evidence="1">Binds 1 divalent metal cation per subunit.</text>
</comment>
<comment type="subcellular location">
    <subcellularLocation>
        <location evidence="1">Cytoplasm</location>
    </subcellularLocation>
</comment>
<comment type="similarity">
    <text evidence="1">Belongs to the SurE nucleotidase family.</text>
</comment>
<organism>
    <name type="scientific">Heliobacterium modesticaldum (strain ATCC 51547 / Ice1)</name>
    <dbReference type="NCBI Taxonomy" id="498761"/>
    <lineage>
        <taxon>Bacteria</taxon>
        <taxon>Bacillati</taxon>
        <taxon>Bacillota</taxon>
        <taxon>Clostridia</taxon>
        <taxon>Eubacteriales</taxon>
        <taxon>Heliobacteriaceae</taxon>
        <taxon>Heliomicrobium</taxon>
    </lineage>
</organism>
<dbReference type="EC" id="3.1.3.5" evidence="1"/>
<dbReference type="EMBL" id="CP000930">
    <property type="protein sequence ID" value="ABZ85095.1"/>
    <property type="molecule type" value="Genomic_DNA"/>
</dbReference>
<dbReference type="RefSeq" id="WP_012283589.1">
    <property type="nucleotide sequence ID" value="NC_010337.2"/>
</dbReference>
<dbReference type="SMR" id="B0TAY4"/>
<dbReference type="STRING" id="498761.HM1_2558"/>
<dbReference type="KEGG" id="hmo:HM1_2558"/>
<dbReference type="eggNOG" id="COG0496">
    <property type="taxonomic scope" value="Bacteria"/>
</dbReference>
<dbReference type="HOGENOM" id="CLU_045192_1_3_9"/>
<dbReference type="OrthoDB" id="9780815at2"/>
<dbReference type="Proteomes" id="UP000008550">
    <property type="component" value="Chromosome"/>
</dbReference>
<dbReference type="GO" id="GO:0005737">
    <property type="term" value="C:cytoplasm"/>
    <property type="evidence" value="ECO:0007669"/>
    <property type="project" value="UniProtKB-SubCell"/>
</dbReference>
<dbReference type="GO" id="GO:0008254">
    <property type="term" value="F:3'-nucleotidase activity"/>
    <property type="evidence" value="ECO:0007669"/>
    <property type="project" value="TreeGrafter"/>
</dbReference>
<dbReference type="GO" id="GO:0008253">
    <property type="term" value="F:5'-nucleotidase activity"/>
    <property type="evidence" value="ECO:0007669"/>
    <property type="project" value="UniProtKB-UniRule"/>
</dbReference>
<dbReference type="GO" id="GO:0004309">
    <property type="term" value="F:exopolyphosphatase activity"/>
    <property type="evidence" value="ECO:0007669"/>
    <property type="project" value="TreeGrafter"/>
</dbReference>
<dbReference type="GO" id="GO:0046872">
    <property type="term" value="F:metal ion binding"/>
    <property type="evidence" value="ECO:0007669"/>
    <property type="project" value="UniProtKB-UniRule"/>
</dbReference>
<dbReference type="GO" id="GO:0000166">
    <property type="term" value="F:nucleotide binding"/>
    <property type="evidence" value="ECO:0007669"/>
    <property type="project" value="UniProtKB-KW"/>
</dbReference>
<dbReference type="FunFam" id="3.40.1210.10:FF:000001">
    <property type="entry name" value="5'/3'-nucleotidase SurE"/>
    <property type="match status" value="1"/>
</dbReference>
<dbReference type="Gene3D" id="3.40.1210.10">
    <property type="entry name" value="Survival protein SurE-like phosphatase/nucleotidase"/>
    <property type="match status" value="1"/>
</dbReference>
<dbReference type="HAMAP" id="MF_00060">
    <property type="entry name" value="SurE"/>
    <property type="match status" value="1"/>
</dbReference>
<dbReference type="InterPro" id="IPR030048">
    <property type="entry name" value="SurE"/>
</dbReference>
<dbReference type="InterPro" id="IPR002828">
    <property type="entry name" value="SurE-like_Pase/nucleotidase"/>
</dbReference>
<dbReference type="InterPro" id="IPR036523">
    <property type="entry name" value="SurE-like_sf"/>
</dbReference>
<dbReference type="NCBIfam" id="NF001490">
    <property type="entry name" value="PRK00346.1-4"/>
    <property type="match status" value="1"/>
</dbReference>
<dbReference type="NCBIfam" id="NF001492">
    <property type="entry name" value="PRK00346.2-2"/>
    <property type="match status" value="1"/>
</dbReference>
<dbReference type="NCBIfam" id="TIGR00087">
    <property type="entry name" value="surE"/>
    <property type="match status" value="1"/>
</dbReference>
<dbReference type="PANTHER" id="PTHR30457">
    <property type="entry name" value="5'-NUCLEOTIDASE SURE"/>
    <property type="match status" value="1"/>
</dbReference>
<dbReference type="PANTHER" id="PTHR30457:SF12">
    <property type="entry name" value="5'_3'-NUCLEOTIDASE SURE"/>
    <property type="match status" value="1"/>
</dbReference>
<dbReference type="Pfam" id="PF01975">
    <property type="entry name" value="SurE"/>
    <property type="match status" value="1"/>
</dbReference>
<dbReference type="SUPFAM" id="SSF64167">
    <property type="entry name" value="SurE-like"/>
    <property type="match status" value="1"/>
</dbReference>
<evidence type="ECO:0000255" key="1">
    <source>
        <dbReference type="HAMAP-Rule" id="MF_00060"/>
    </source>
</evidence>
<protein>
    <recommendedName>
        <fullName evidence="1">5'-nucleotidase SurE</fullName>
        <ecNumber evidence="1">3.1.3.5</ecNumber>
    </recommendedName>
    <alternativeName>
        <fullName evidence="1">Nucleoside 5'-monophosphate phosphohydrolase</fullName>
    </alternativeName>
</protein>